<name>KOSYN_HERA2</name>
<reference key="1">
    <citation type="journal article" date="2011" name="Stand. Genomic Sci.">
        <title>Complete genome sequence of the filamentous gliding predatory bacterium Herpetosiphon aurantiacus type strain (114-95(T)).</title>
        <authorList>
            <person name="Kiss H."/>
            <person name="Nett M."/>
            <person name="Domin N."/>
            <person name="Martin K."/>
            <person name="Maresca J.A."/>
            <person name="Copeland A."/>
            <person name="Lapidus A."/>
            <person name="Lucas S."/>
            <person name="Berry K.W."/>
            <person name="Glavina Del Rio T."/>
            <person name="Dalin E."/>
            <person name="Tice H."/>
            <person name="Pitluck S."/>
            <person name="Richardson P."/>
            <person name="Bruce D."/>
            <person name="Goodwin L."/>
            <person name="Han C."/>
            <person name="Detter J.C."/>
            <person name="Schmutz J."/>
            <person name="Brettin T."/>
            <person name="Land M."/>
            <person name="Hauser L."/>
            <person name="Kyrpides N.C."/>
            <person name="Ivanova N."/>
            <person name="Goeker M."/>
            <person name="Woyke T."/>
            <person name="Klenk H.P."/>
            <person name="Bryant D.A."/>
        </authorList>
    </citation>
    <scope>NUCLEOTIDE SEQUENCE [LARGE SCALE GENOMIC DNA]</scope>
    <source>
        <strain evidence="5">ATCC 23779 / DSM 785 / 114-95</strain>
    </source>
</reference>
<reference key="2">
    <citation type="journal article" date="2015" name="ChemBioChem">
        <title>Identification of a new diterpene biosynthetic gene cluster that produces O-methylkolavelool in Herpetosiphon aurantiacus.</title>
        <authorList>
            <person name="Nakano C."/>
            <person name="Oshima M."/>
            <person name="Kurashima N."/>
            <person name="Hoshino T."/>
        </authorList>
    </citation>
    <scope>FUNCTION</scope>
    <scope>CATALYTIC ACTIVITY</scope>
    <source>
        <strain>ATCC 23779 / DSM 785 / 114-95</strain>
    </source>
</reference>
<dbReference type="EC" id="3.1.7.12" evidence="1"/>
<dbReference type="EMBL" id="CP000875">
    <property type="protein sequence ID" value="ABX04786.1"/>
    <property type="molecule type" value="Genomic_DNA"/>
</dbReference>
<dbReference type="SMR" id="A9AWD6"/>
<dbReference type="STRING" id="316274.Haur_2146"/>
<dbReference type="KEGG" id="hau:Haur_2146"/>
<dbReference type="eggNOG" id="ENOG502ZJEY">
    <property type="taxonomic scope" value="Bacteria"/>
</dbReference>
<dbReference type="HOGENOM" id="CLU_962320_0_0_0"/>
<dbReference type="InParanoid" id="A9AWD6"/>
<dbReference type="BioCyc" id="HAUR316274:GHYA-2174-MONOMER"/>
<dbReference type="BRENDA" id="3.1.7.12">
    <property type="organism ID" value="2656"/>
</dbReference>
<dbReference type="Proteomes" id="UP000000787">
    <property type="component" value="Chromosome"/>
</dbReference>
<dbReference type="GO" id="GO:0016787">
    <property type="term" value="F:hydrolase activity"/>
    <property type="evidence" value="ECO:0007669"/>
    <property type="project" value="UniProtKB-KW"/>
</dbReference>
<dbReference type="GO" id="GO:0016765">
    <property type="term" value="F:transferase activity, transferring alkyl or aryl (other than methyl) groups"/>
    <property type="evidence" value="ECO:0007669"/>
    <property type="project" value="InterPro"/>
</dbReference>
<dbReference type="Gene3D" id="3.40.1180.10">
    <property type="entry name" value="Decaprenyl diphosphate synthase-like"/>
    <property type="match status" value="1"/>
</dbReference>
<dbReference type="InterPro" id="IPR036424">
    <property type="entry name" value="UPP_synth-like_sf"/>
</dbReference>
<feature type="chain" id="PRO_0000443952" description="(+)-kolavelool synthase">
    <location>
        <begin position="1"/>
        <end position="289"/>
    </location>
</feature>
<organism>
    <name type="scientific">Herpetosiphon aurantiacus (strain ATCC 23779 / DSM 785 / 114-95)</name>
    <dbReference type="NCBI Taxonomy" id="316274"/>
    <lineage>
        <taxon>Bacteria</taxon>
        <taxon>Bacillati</taxon>
        <taxon>Chloroflexota</taxon>
        <taxon>Chloroflexia</taxon>
        <taxon>Herpetosiphonales</taxon>
        <taxon>Herpetosiphonaceae</taxon>
        <taxon>Herpetosiphon</taxon>
    </lineage>
</organism>
<sequence length="289" mass="33593">MRPTPTLAEFLHAPLTTIRQVAPATMVFSSGGSRRKAALANMSAAGEEYARWSHQQLLKCLELFFSHGIKHLFLPMLLPNQFQETTPNYREHIEQWVAWGAASQTMLEYYQEHNWRVRLLDTQYSPILADAAQRLQQPYDHPDQPTLWWFVVRDSEDPWQIIFQAAQKTVFKTRSQAIEAIYGEPIPPAELFVSFGKPQVNHDLLPPLLVGELQCYWTQKPGYTLSEEEFRQILYDFAFLRKTWQVDKTERTQAALAFRQHWERGPILGLGQQLGPFWYPQSTSIESEL</sequence>
<accession>A9AWD6</accession>
<evidence type="ECO:0000269" key="1">
    <source>
    </source>
</evidence>
<evidence type="ECO:0000303" key="2">
    <source>
    </source>
</evidence>
<evidence type="ECO:0000305" key="3"/>
<evidence type="ECO:0000312" key="4">
    <source>
        <dbReference type="EMBL" id="ABX04786.1"/>
    </source>
</evidence>
<evidence type="ECO:0000312" key="5">
    <source>
        <dbReference type="Proteomes" id="UP000000787"/>
    </source>
</evidence>
<comment type="function">
    <text evidence="1">Involved in the biosynthesis of (+)-O-methylkolavelool. Catalyzes the biosynthesis of (+)-kolavelool from (+)-kolavenyl diphosphate via the release of the diphosphate moiety through the nucleophilic addition of a water molecule.</text>
</comment>
<comment type="catalytic activity">
    <reaction evidence="1">
        <text>(+)-kolavenyl diphosphate + H2O = (+)-kolavelool + diphosphate</text>
        <dbReference type="Rhea" id="RHEA:54672"/>
        <dbReference type="ChEBI" id="CHEBI:15377"/>
        <dbReference type="ChEBI" id="CHEBI:33019"/>
        <dbReference type="ChEBI" id="CHEBI:138311"/>
        <dbReference type="ChEBI" id="CHEBI:138313"/>
        <dbReference type="EC" id="3.1.7.12"/>
    </reaction>
</comment>
<comment type="similarity">
    <text evidence="3">Belongs to the diterpene synthase family.</text>
</comment>
<protein>
    <recommendedName>
        <fullName evidence="2">(+)-kolavelool synthase</fullName>
        <ecNumber evidence="1">3.1.7.12</ecNumber>
    </recommendedName>
</protein>
<keyword id="KW-0378">Hydrolase</keyword>
<gene>
    <name evidence="4" type="ordered locus">Haur_2146</name>
</gene>
<proteinExistence type="evidence at protein level"/>